<keyword id="KW-0067">ATP-binding</keyword>
<keyword id="KW-0131">Cell cycle</keyword>
<keyword id="KW-0132">Cell division</keyword>
<keyword id="KW-0159">Chromosome partition</keyword>
<keyword id="KW-0175">Coiled coil</keyword>
<keyword id="KW-0963">Cytoplasm</keyword>
<keyword id="KW-0226">DNA condensation</keyword>
<keyword id="KW-0238">DNA-binding</keyword>
<keyword id="KW-0547">Nucleotide-binding</keyword>
<feature type="chain" id="PRO_1000187475" description="Chromosome partition protein MukB">
    <location>
        <begin position="1"/>
        <end position="1486"/>
    </location>
</feature>
<feature type="region of interest" description="Flexible hinge" evidence="1">
    <location>
        <begin position="666"/>
        <end position="783"/>
    </location>
</feature>
<feature type="coiled-coil region" evidence="1">
    <location>
        <begin position="326"/>
        <end position="418"/>
    </location>
</feature>
<feature type="coiled-coil region" evidence="1">
    <location>
        <begin position="444"/>
        <end position="480"/>
    </location>
</feature>
<feature type="coiled-coil region" evidence="1">
    <location>
        <begin position="509"/>
        <end position="603"/>
    </location>
</feature>
<feature type="coiled-coil region" evidence="1">
    <location>
        <begin position="835"/>
        <end position="923"/>
    </location>
</feature>
<feature type="coiled-coil region" evidence="1">
    <location>
        <begin position="977"/>
        <end position="1115"/>
    </location>
</feature>
<feature type="coiled-coil region" evidence="1">
    <location>
        <begin position="1209"/>
        <end position="1266"/>
    </location>
</feature>
<feature type="binding site" evidence="1">
    <location>
        <begin position="34"/>
        <end position="41"/>
    </location>
    <ligand>
        <name>ATP</name>
        <dbReference type="ChEBI" id="CHEBI:30616"/>
    </ligand>
</feature>
<reference key="1">
    <citation type="journal article" date="2008" name="DNA Res.">
        <title>Complete genome sequence and comparative analysis of the wild-type commensal Escherichia coli strain SE11 isolated from a healthy adult.</title>
        <authorList>
            <person name="Oshima K."/>
            <person name="Toh H."/>
            <person name="Ogura Y."/>
            <person name="Sasamoto H."/>
            <person name="Morita H."/>
            <person name="Park S.-H."/>
            <person name="Ooka T."/>
            <person name="Iyoda S."/>
            <person name="Taylor T.D."/>
            <person name="Hayashi T."/>
            <person name="Itoh K."/>
            <person name="Hattori M."/>
        </authorList>
    </citation>
    <scope>NUCLEOTIDE SEQUENCE [LARGE SCALE GENOMIC DNA]</scope>
    <source>
        <strain>SE11</strain>
    </source>
</reference>
<dbReference type="EMBL" id="AP009240">
    <property type="protein sequence ID" value="BAG76507.1"/>
    <property type="molecule type" value="Genomic_DNA"/>
</dbReference>
<dbReference type="RefSeq" id="WP_000572634.1">
    <property type="nucleotide sequence ID" value="NC_011415.1"/>
</dbReference>
<dbReference type="SMR" id="B6I8Z6"/>
<dbReference type="GeneID" id="75205326"/>
<dbReference type="KEGG" id="ecy:ECSE_0983"/>
<dbReference type="HOGENOM" id="CLU_004430_0_0_6"/>
<dbReference type="Proteomes" id="UP000008199">
    <property type="component" value="Chromosome"/>
</dbReference>
<dbReference type="GO" id="GO:0005737">
    <property type="term" value="C:cytoplasm"/>
    <property type="evidence" value="ECO:0007669"/>
    <property type="project" value="UniProtKB-UniRule"/>
</dbReference>
<dbReference type="GO" id="GO:0009295">
    <property type="term" value="C:nucleoid"/>
    <property type="evidence" value="ECO:0007669"/>
    <property type="project" value="UniProtKB-SubCell"/>
</dbReference>
<dbReference type="GO" id="GO:0005524">
    <property type="term" value="F:ATP binding"/>
    <property type="evidence" value="ECO:0007669"/>
    <property type="project" value="UniProtKB-UniRule"/>
</dbReference>
<dbReference type="GO" id="GO:0003677">
    <property type="term" value="F:DNA binding"/>
    <property type="evidence" value="ECO:0007669"/>
    <property type="project" value="UniProtKB-UniRule"/>
</dbReference>
<dbReference type="GO" id="GO:0051301">
    <property type="term" value="P:cell division"/>
    <property type="evidence" value="ECO:0007669"/>
    <property type="project" value="UniProtKB-KW"/>
</dbReference>
<dbReference type="GO" id="GO:0030261">
    <property type="term" value="P:chromosome condensation"/>
    <property type="evidence" value="ECO:0007669"/>
    <property type="project" value="UniProtKB-KW"/>
</dbReference>
<dbReference type="GO" id="GO:0007059">
    <property type="term" value="P:chromosome segregation"/>
    <property type="evidence" value="ECO:0007669"/>
    <property type="project" value="UniProtKB-UniRule"/>
</dbReference>
<dbReference type="GO" id="GO:0006260">
    <property type="term" value="P:DNA replication"/>
    <property type="evidence" value="ECO:0007669"/>
    <property type="project" value="UniProtKB-UniRule"/>
</dbReference>
<dbReference type="FunFam" id="1.20.58.850:FF:000001">
    <property type="entry name" value="Chromosome partition protein MukB"/>
    <property type="match status" value="1"/>
</dbReference>
<dbReference type="FunFam" id="3.30.70.3500:FF:000001">
    <property type="entry name" value="Chromosome partition protein MukB"/>
    <property type="match status" value="1"/>
</dbReference>
<dbReference type="FunFam" id="3.40.1140.10:FF:000001">
    <property type="entry name" value="Chromosome partition protein MukB"/>
    <property type="match status" value="1"/>
</dbReference>
<dbReference type="FunFam" id="3.40.1140.10:FF:000002">
    <property type="entry name" value="Chromosome partition protein MukB"/>
    <property type="match status" value="1"/>
</dbReference>
<dbReference type="Gene3D" id="1.20.58.850">
    <property type="match status" value="1"/>
</dbReference>
<dbReference type="Gene3D" id="3.40.1140.10">
    <property type="match status" value="2"/>
</dbReference>
<dbReference type="Gene3D" id="1.20.5.420">
    <property type="entry name" value="Immunoglobulin FC, subunit C"/>
    <property type="match status" value="1"/>
</dbReference>
<dbReference type="Gene3D" id="3.30.70.3500">
    <property type="entry name" value="MukB, hinge domain"/>
    <property type="match status" value="1"/>
</dbReference>
<dbReference type="HAMAP" id="MF_01800">
    <property type="entry name" value="MukB"/>
    <property type="match status" value="1"/>
</dbReference>
<dbReference type="InterPro" id="IPR012090">
    <property type="entry name" value="MukB"/>
</dbReference>
<dbReference type="InterPro" id="IPR050308">
    <property type="entry name" value="MukB/SMC"/>
</dbReference>
<dbReference type="InterPro" id="IPR032520">
    <property type="entry name" value="MukB_hinge"/>
</dbReference>
<dbReference type="InterPro" id="IPR042501">
    <property type="entry name" value="MukB_hinge_sf"/>
</dbReference>
<dbReference type="InterPro" id="IPR007406">
    <property type="entry name" value="MukB_N_dom"/>
</dbReference>
<dbReference type="InterPro" id="IPR027417">
    <property type="entry name" value="P-loop_NTPase"/>
</dbReference>
<dbReference type="NCBIfam" id="NF003422">
    <property type="entry name" value="PRK04863.1"/>
    <property type="match status" value="1"/>
</dbReference>
<dbReference type="PANTHER" id="PTHR42963">
    <property type="entry name" value="CHROMOSOME PARTITION PROTEIN MUKB"/>
    <property type="match status" value="1"/>
</dbReference>
<dbReference type="PANTHER" id="PTHR42963:SF1">
    <property type="entry name" value="DUF4476 DOMAIN-CONTAINING PROTEIN"/>
    <property type="match status" value="1"/>
</dbReference>
<dbReference type="Pfam" id="PF04310">
    <property type="entry name" value="MukB"/>
    <property type="match status" value="1"/>
</dbReference>
<dbReference type="Pfam" id="PF16330">
    <property type="entry name" value="MukB_hinge"/>
    <property type="match status" value="1"/>
</dbReference>
<dbReference type="Pfam" id="PF13558">
    <property type="entry name" value="SbcC_Walker_B"/>
    <property type="match status" value="1"/>
</dbReference>
<dbReference type="PIRSF" id="PIRSF005246">
    <property type="entry name" value="MukB"/>
    <property type="match status" value="1"/>
</dbReference>
<dbReference type="SUPFAM" id="SSF52540">
    <property type="entry name" value="P-loop containing nucleoside triphosphate hydrolases"/>
    <property type="match status" value="2"/>
</dbReference>
<sequence length="1486" mass="170187">MIERGKFRSLTLINWNGFFARTFDLDELVTTLSGGNGAGKSTTMAAFVTALIPDLTLLHFRNTTEAGATSGSRDKGLHGKLKAGVCYSMLDTINSRHQRVVVGVRLQQVAGRDRKVDIKPFAIQGLPMSVQPTQLVTETLNERQARVLPLNELKDKLEAMEGVQFKQFNSITDYHSLMFDLGIIARRLRSASDRSKFYRLIEASLYGGISSAITRSLRDYLLPENSGVRKAFQDMEAALRENRMTLEAIRVTQSDRDLFKHLISEATNYVAADYMRHANERRVHLDKALEFRRELHTSRQQLAAEQYKHVDMARELAEHNGAEGDLEADYQAASDHLNLVQTALRQQEKIERYEADLDELQIRLEEQNEVVAEAIERQEENEARAEAAELEVDELKSQLADYQQALDVQQTRAIQYNQAIAALNRAKELCHLPDLTADCAAEWLETFQAKELEATEKMLSLEQKMSMAQTAHSQFEQAYQLVVAINGPLARNEAWDVARELLREGVDQRHLAEQVQPLRMRLSELEQRLREQQEAERLLADFCKRQGKNFDIDELEALHQELEARIASLSDSVSNAREERMALRQEQEQLQSRIQSLMQRAPVWLAAQNSLNQLSEQCGEEFTSSQDVTEYLQQLLEREREAIVERDEVGARKNAVDEEIERLSQPGGSEDQRLNALAERFGGVLLSEIYDDVSLEDAPYFSALYGPSRHAIVVPDLSQVTEHLEGLTDCPEDLYLIEGDPQSFDDSVFSVDELEKAVVVKIADRQWRYSRFPEVPLFGRAARESRIESLHAEREVLSERFATLSFDVQKTQRLHQAFSRFIGSHLAVAFESDPEAEIRQLNSRRVELERALSNHENDNQQQRIQFEQAKEGVTALNRILPRLNLLADDSLADRVDEIRERLDEAQEAARFVQQFGNQLAKLEPIVSVLQSDPEQFEQLKEDYAYSQQMQRDARQQAFALTEVVQRRAHFSYSDSAEMLSGNSDLNEKLRERLEQAEAERTRAREALRGHAAQLSQYNQVLASLKSSYDTKKELLNDLQRELQDIGVRADSGAEERARIRRDELHAQLSNNRSRRNQLEKALTFCEAEMDNLTRKLRKLERDYFEMREQVVTAKAGWCAVMRMVKDNGVERRLHRRELAYLSADDLRSMSDKALGALRLAVADNEHLRDVLRMSEDPKRPERKIQFFVAVYQHLRERIRQDIIRTDDPVEAIEQMEIELSRLTEELTSREQKLAISSRSVANIIRKTIQREQNRIRMLNQGLQNVSFGQVNSVRLNVNVRETHAMLLDVLSEQHEQHQDLFNSNRLTFSEALAKLYQRLNPQIDMGQRAPQTIGEELLDYRNYLEMEVEVNRGSDGWLRAESGALSTGEAIGTGMSILVMVVQSWEDESRRLRGKDISPCRLLFLDEAARLDARSIATLFELCERLQMQLIIAAPENISPEKGTTYKLVRKVFQNTEHVHVVGLRGFAPQLPETLPGSDEAPSQAS</sequence>
<name>MUKB_ECOSE</name>
<gene>
    <name evidence="1" type="primary">mukB</name>
    <name type="ordered locus">ECSE_0983</name>
</gene>
<protein>
    <recommendedName>
        <fullName evidence="1">Chromosome partition protein MukB</fullName>
    </recommendedName>
    <alternativeName>
        <fullName evidence="1">Structural maintenance of chromosome-related protein</fullName>
    </alternativeName>
</protein>
<accession>B6I8Z6</accession>
<organism>
    <name type="scientific">Escherichia coli (strain SE11)</name>
    <dbReference type="NCBI Taxonomy" id="409438"/>
    <lineage>
        <taxon>Bacteria</taxon>
        <taxon>Pseudomonadati</taxon>
        <taxon>Pseudomonadota</taxon>
        <taxon>Gammaproteobacteria</taxon>
        <taxon>Enterobacterales</taxon>
        <taxon>Enterobacteriaceae</taxon>
        <taxon>Escherichia</taxon>
    </lineage>
</organism>
<comment type="function">
    <text evidence="1">Plays a central role in chromosome condensation, segregation and cell cycle progression. Functions as a homodimer, which is essential for chromosome partition. Involved in negative DNA supercoiling in vivo, and by this means organize and compact chromosomes. May achieve or facilitate chromosome segregation by condensation DNA from both sides of a centrally located replisome during cell division.</text>
</comment>
<comment type="subunit">
    <text evidence="1">Homodimerization via its hinge domain. Binds to DNA via its C-terminal region. Interacts, and probably forms a ternary complex, with MukE and MukF via its C-terminal region. The complex formation is stimulated by calcium or magnesium. Interacts with tubulin-related protein FtsZ.</text>
</comment>
<comment type="subcellular location">
    <subcellularLocation>
        <location evidence="1">Cytoplasm</location>
        <location evidence="1">Nucleoid</location>
    </subcellularLocation>
    <text evidence="1">Restricted to the nucleoid region.</text>
</comment>
<comment type="domain">
    <text evidence="1">The hinge domain, which separates the large intramolecular coiled coil regions, allows the homodimerization, forming a V-shaped homodimer.</text>
</comment>
<comment type="similarity">
    <text evidence="1">Belongs to the SMC family. MukB subfamily.</text>
</comment>
<proteinExistence type="inferred from homology"/>
<evidence type="ECO:0000255" key="1">
    <source>
        <dbReference type="HAMAP-Rule" id="MF_01800"/>
    </source>
</evidence>